<evidence type="ECO:0000255" key="1">
    <source>
        <dbReference type="HAMAP-Rule" id="MF_00406"/>
    </source>
</evidence>
<reference key="1">
    <citation type="journal article" date="2012" name="BMC Genomics">
        <title>Comparative genomics and transcriptomics of lineages I, II, and III strains of Listeria monocytogenes.</title>
        <authorList>
            <person name="Hain T."/>
            <person name="Ghai R."/>
            <person name="Billion A."/>
            <person name="Kuenne C.T."/>
            <person name="Steinweg C."/>
            <person name="Izar B."/>
            <person name="Mohamed W."/>
            <person name="Mraheil M."/>
            <person name="Domann E."/>
            <person name="Schaffrath S."/>
            <person name="Karst U."/>
            <person name="Goesmann A."/>
            <person name="Oehm S."/>
            <person name="Puhler A."/>
            <person name="Merkl R."/>
            <person name="Vorwerk S."/>
            <person name="Glaser P."/>
            <person name="Garrido P."/>
            <person name="Rusniok C."/>
            <person name="Buchrieser C."/>
            <person name="Goebel W."/>
            <person name="Chakraborty T."/>
        </authorList>
    </citation>
    <scope>NUCLEOTIDE SEQUENCE [LARGE SCALE GENOMIC DNA]</scope>
    <source>
        <strain>CLIP80459</strain>
    </source>
</reference>
<dbReference type="EC" id="4.2.1.59" evidence="1"/>
<dbReference type="EMBL" id="FM242711">
    <property type="protein sequence ID" value="CAS06248.1"/>
    <property type="molecule type" value="Genomic_DNA"/>
</dbReference>
<dbReference type="RefSeq" id="WP_003723457.1">
    <property type="nucleotide sequence ID" value="NC_012488.1"/>
</dbReference>
<dbReference type="SMR" id="C1KYU1"/>
<dbReference type="GeneID" id="93240392"/>
<dbReference type="KEGG" id="lmc:Lm4b_02493"/>
<dbReference type="HOGENOM" id="CLU_078912_3_0_9"/>
<dbReference type="GO" id="GO:0005737">
    <property type="term" value="C:cytoplasm"/>
    <property type="evidence" value="ECO:0007669"/>
    <property type="project" value="UniProtKB-SubCell"/>
</dbReference>
<dbReference type="GO" id="GO:0016020">
    <property type="term" value="C:membrane"/>
    <property type="evidence" value="ECO:0007669"/>
    <property type="project" value="GOC"/>
</dbReference>
<dbReference type="GO" id="GO:0019171">
    <property type="term" value="F:(3R)-hydroxyacyl-[acyl-carrier-protein] dehydratase activity"/>
    <property type="evidence" value="ECO:0007669"/>
    <property type="project" value="UniProtKB-EC"/>
</dbReference>
<dbReference type="GO" id="GO:0006633">
    <property type="term" value="P:fatty acid biosynthetic process"/>
    <property type="evidence" value="ECO:0007669"/>
    <property type="project" value="UniProtKB-UniRule"/>
</dbReference>
<dbReference type="GO" id="GO:0009245">
    <property type="term" value="P:lipid A biosynthetic process"/>
    <property type="evidence" value="ECO:0007669"/>
    <property type="project" value="UniProtKB-UniRule"/>
</dbReference>
<dbReference type="CDD" id="cd01288">
    <property type="entry name" value="FabZ"/>
    <property type="match status" value="1"/>
</dbReference>
<dbReference type="FunFam" id="3.10.129.10:FF:000001">
    <property type="entry name" value="3-hydroxyacyl-[acyl-carrier-protein] dehydratase FabZ"/>
    <property type="match status" value="1"/>
</dbReference>
<dbReference type="Gene3D" id="3.10.129.10">
    <property type="entry name" value="Hotdog Thioesterase"/>
    <property type="match status" value="1"/>
</dbReference>
<dbReference type="HAMAP" id="MF_00406">
    <property type="entry name" value="FabZ"/>
    <property type="match status" value="1"/>
</dbReference>
<dbReference type="InterPro" id="IPR013114">
    <property type="entry name" value="FabA_FabZ"/>
</dbReference>
<dbReference type="InterPro" id="IPR010084">
    <property type="entry name" value="FabZ"/>
</dbReference>
<dbReference type="InterPro" id="IPR029069">
    <property type="entry name" value="HotDog_dom_sf"/>
</dbReference>
<dbReference type="NCBIfam" id="TIGR01750">
    <property type="entry name" value="fabZ"/>
    <property type="match status" value="1"/>
</dbReference>
<dbReference type="NCBIfam" id="NF000582">
    <property type="entry name" value="PRK00006.1"/>
    <property type="match status" value="1"/>
</dbReference>
<dbReference type="PANTHER" id="PTHR30272">
    <property type="entry name" value="3-HYDROXYACYL-[ACYL-CARRIER-PROTEIN] DEHYDRATASE"/>
    <property type="match status" value="1"/>
</dbReference>
<dbReference type="PANTHER" id="PTHR30272:SF1">
    <property type="entry name" value="3-HYDROXYACYL-[ACYL-CARRIER-PROTEIN] DEHYDRATASE"/>
    <property type="match status" value="1"/>
</dbReference>
<dbReference type="Pfam" id="PF07977">
    <property type="entry name" value="FabA"/>
    <property type="match status" value="1"/>
</dbReference>
<dbReference type="SUPFAM" id="SSF54637">
    <property type="entry name" value="Thioesterase/thiol ester dehydrase-isomerase"/>
    <property type="match status" value="1"/>
</dbReference>
<accession>C1KYU1</accession>
<comment type="function">
    <text evidence="1">Involved in unsaturated fatty acids biosynthesis. Catalyzes the dehydration of short chain beta-hydroxyacyl-ACPs and long chain saturated and unsaturated beta-hydroxyacyl-ACPs.</text>
</comment>
<comment type="catalytic activity">
    <reaction evidence="1">
        <text>a (3R)-hydroxyacyl-[ACP] = a (2E)-enoyl-[ACP] + H2O</text>
        <dbReference type="Rhea" id="RHEA:13097"/>
        <dbReference type="Rhea" id="RHEA-COMP:9925"/>
        <dbReference type="Rhea" id="RHEA-COMP:9945"/>
        <dbReference type="ChEBI" id="CHEBI:15377"/>
        <dbReference type="ChEBI" id="CHEBI:78784"/>
        <dbReference type="ChEBI" id="CHEBI:78827"/>
        <dbReference type="EC" id="4.2.1.59"/>
    </reaction>
</comment>
<comment type="subcellular location">
    <subcellularLocation>
        <location evidence="1">Cytoplasm</location>
    </subcellularLocation>
</comment>
<comment type="similarity">
    <text evidence="1">Belongs to the thioester dehydratase family. FabZ subfamily.</text>
</comment>
<feature type="chain" id="PRO_1000205944" description="3-hydroxyacyl-[acyl-carrier-protein] dehydratase FabZ">
    <location>
        <begin position="1"/>
        <end position="144"/>
    </location>
</feature>
<feature type="active site" evidence="1">
    <location>
        <position position="48"/>
    </location>
</feature>
<sequence length="144" mass="15858">MLDIKKIKEILPHRYPFLLVDRVISVEEGKKVTAIKNVTANEEFFNGHFPEYPVMPGVLIVEALAQTSGIAMMQSEANKGKIGLFAGIDGCRFKRQVVPGDQLLLEAEITRMRGAIAKAKVKATVEGDLVCEAEIMFALSDLPK</sequence>
<keyword id="KW-0963">Cytoplasm</keyword>
<keyword id="KW-0441">Lipid A biosynthesis</keyword>
<keyword id="KW-0444">Lipid biosynthesis</keyword>
<keyword id="KW-0443">Lipid metabolism</keyword>
<keyword id="KW-0456">Lyase</keyword>
<organism>
    <name type="scientific">Listeria monocytogenes serotype 4b (strain CLIP80459)</name>
    <dbReference type="NCBI Taxonomy" id="568819"/>
    <lineage>
        <taxon>Bacteria</taxon>
        <taxon>Bacillati</taxon>
        <taxon>Bacillota</taxon>
        <taxon>Bacilli</taxon>
        <taxon>Bacillales</taxon>
        <taxon>Listeriaceae</taxon>
        <taxon>Listeria</taxon>
    </lineage>
</organism>
<proteinExistence type="inferred from homology"/>
<gene>
    <name evidence="1" type="primary">fabZ</name>
    <name type="ordered locus">Lm4b_02493</name>
</gene>
<protein>
    <recommendedName>
        <fullName evidence="1">3-hydroxyacyl-[acyl-carrier-protein] dehydratase FabZ</fullName>
        <ecNumber evidence="1">4.2.1.59</ecNumber>
    </recommendedName>
    <alternativeName>
        <fullName evidence="1">(3R)-hydroxymyristoyl-[acyl-carrier-protein] dehydratase</fullName>
        <shortName evidence="1">(3R)-hydroxymyristoyl-ACP dehydrase</shortName>
    </alternativeName>
    <alternativeName>
        <fullName evidence="1">Beta-hydroxyacyl-ACP dehydratase</fullName>
    </alternativeName>
</protein>
<name>FABZ_LISMC</name>